<comment type="function">
    <text evidence="1">One of the primary rRNA binding proteins, it binds directly to 16S rRNA central domain where it helps coordinate assembly of the platform of the 30S subunit.</text>
</comment>
<comment type="subunit">
    <text evidence="1">Part of the 30S ribosomal subunit. Contacts proteins S5 and S12.</text>
</comment>
<comment type="similarity">
    <text evidence="1">Belongs to the universal ribosomal protein uS8 family.</text>
</comment>
<protein>
    <recommendedName>
        <fullName evidence="1">Small ribosomal subunit protein uS8</fullName>
    </recommendedName>
    <alternativeName>
        <fullName evidence="2">30S ribosomal protein S8</fullName>
    </alternativeName>
</protein>
<reference key="1">
    <citation type="submission" date="2007-10" db="EMBL/GenBank/DDBJ databases">
        <title>Complete sequence of Shewanella pealeana ATCC 700345.</title>
        <authorList>
            <consortium name="US DOE Joint Genome Institute"/>
            <person name="Copeland A."/>
            <person name="Lucas S."/>
            <person name="Lapidus A."/>
            <person name="Barry K."/>
            <person name="Glavina del Rio T."/>
            <person name="Dalin E."/>
            <person name="Tice H."/>
            <person name="Pitluck S."/>
            <person name="Chertkov O."/>
            <person name="Brettin T."/>
            <person name="Bruce D."/>
            <person name="Detter J.C."/>
            <person name="Han C."/>
            <person name="Schmutz J."/>
            <person name="Larimer F."/>
            <person name="Land M."/>
            <person name="Hauser L."/>
            <person name="Kyrpides N."/>
            <person name="Kim E."/>
            <person name="Zhao J.-S.Z."/>
            <person name="Manno D."/>
            <person name="Hawari J."/>
            <person name="Richardson P."/>
        </authorList>
    </citation>
    <scope>NUCLEOTIDE SEQUENCE [LARGE SCALE GENOMIC DNA]</scope>
    <source>
        <strain>ATCC 700345 / ANG-SQ1</strain>
    </source>
</reference>
<gene>
    <name evidence="1" type="primary">rpsH</name>
    <name type="ordered locus">Spea_0198</name>
</gene>
<proteinExistence type="inferred from homology"/>
<evidence type="ECO:0000255" key="1">
    <source>
        <dbReference type="HAMAP-Rule" id="MF_01302"/>
    </source>
</evidence>
<evidence type="ECO:0000305" key="2"/>
<sequence length="130" mass="14213">MSMQDPIADMLTRIRNGQAAKHVSVKMPSAKLKIAIAKMLKEEGYITDYAVADEAKPELEITLKYFQGQPVVETIQRVSRPGLRIYKGKNELPKVMGGLGVAIVSTSQGLMTDRTARQNGMGGEVICYVA</sequence>
<dbReference type="EMBL" id="CP000851">
    <property type="protein sequence ID" value="ABV85527.1"/>
    <property type="molecule type" value="Genomic_DNA"/>
</dbReference>
<dbReference type="RefSeq" id="WP_012153468.1">
    <property type="nucleotide sequence ID" value="NC_009901.1"/>
</dbReference>
<dbReference type="SMR" id="A8GYZ0"/>
<dbReference type="STRING" id="398579.Spea_0198"/>
<dbReference type="KEGG" id="spl:Spea_0198"/>
<dbReference type="eggNOG" id="COG0096">
    <property type="taxonomic scope" value="Bacteria"/>
</dbReference>
<dbReference type="HOGENOM" id="CLU_098428_0_0_6"/>
<dbReference type="OrthoDB" id="9802617at2"/>
<dbReference type="Proteomes" id="UP000002608">
    <property type="component" value="Chromosome"/>
</dbReference>
<dbReference type="GO" id="GO:1990904">
    <property type="term" value="C:ribonucleoprotein complex"/>
    <property type="evidence" value="ECO:0007669"/>
    <property type="project" value="UniProtKB-KW"/>
</dbReference>
<dbReference type="GO" id="GO:0005840">
    <property type="term" value="C:ribosome"/>
    <property type="evidence" value="ECO:0007669"/>
    <property type="project" value="UniProtKB-KW"/>
</dbReference>
<dbReference type="GO" id="GO:0019843">
    <property type="term" value="F:rRNA binding"/>
    <property type="evidence" value="ECO:0007669"/>
    <property type="project" value="UniProtKB-UniRule"/>
</dbReference>
<dbReference type="GO" id="GO:0003735">
    <property type="term" value="F:structural constituent of ribosome"/>
    <property type="evidence" value="ECO:0007669"/>
    <property type="project" value="InterPro"/>
</dbReference>
<dbReference type="GO" id="GO:0006412">
    <property type="term" value="P:translation"/>
    <property type="evidence" value="ECO:0007669"/>
    <property type="project" value="UniProtKB-UniRule"/>
</dbReference>
<dbReference type="FunFam" id="3.30.1370.30:FF:000003">
    <property type="entry name" value="30S ribosomal protein S8"/>
    <property type="match status" value="1"/>
</dbReference>
<dbReference type="FunFam" id="3.30.1490.10:FF:000001">
    <property type="entry name" value="30S ribosomal protein S8"/>
    <property type="match status" value="1"/>
</dbReference>
<dbReference type="Gene3D" id="3.30.1370.30">
    <property type="match status" value="1"/>
</dbReference>
<dbReference type="Gene3D" id="3.30.1490.10">
    <property type="match status" value="1"/>
</dbReference>
<dbReference type="HAMAP" id="MF_01302_B">
    <property type="entry name" value="Ribosomal_uS8_B"/>
    <property type="match status" value="1"/>
</dbReference>
<dbReference type="InterPro" id="IPR000630">
    <property type="entry name" value="Ribosomal_uS8"/>
</dbReference>
<dbReference type="InterPro" id="IPR047863">
    <property type="entry name" value="Ribosomal_uS8_CS"/>
</dbReference>
<dbReference type="InterPro" id="IPR035987">
    <property type="entry name" value="Ribosomal_uS8_sf"/>
</dbReference>
<dbReference type="NCBIfam" id="NF001109">
    <property type="entry name" value="PRK00136.1"/>
    <property type="match status" value="1"/>
</dbReference>
<dbReference type="PANTHER" id="PTHR11758">
    <property type="entry name" value="40S RIBOSOMAL PROTEIN S15A"/>
    <property type="match status" value="1"/>
</dbReference>
<dbReference type="Pfam" id="PF00410">
    <property type="entry name" value="Ribosomal_S8"/>
    <property type="match status" value="1"/>
</dbReference>
<dbReference type="SUPFAM" id="SSF56047">
    <property type="entry name" value="Ribosomal protein S8"/>
    <property type="match status" value="1"/>
</dbReference>
<dbReference type="PROSITE" id="PS00053">
    <property type="entry name" value="RIBOSOMAL_S8"/>
    <property type="match status" value="1"/>
</dbReference>
<keyword id="KW-1185">Reference proteome</keyword>
<keyword id="KW-0687">Ribonucleoprotein</keyword>
<keyword id="KW-0689">Ribosomal protein</keyword>
<keyword id="KW-0694">RNA-binding</keyword>
<keyword id="KW-0699">rRNA-binding</keyword>
<accession>A8GYZ0</accession>
<name>RS8_SHEPA</name>
<organism>
    <name type="scientific">Shewanella pealeana (strain ATCC 700345 / ANG-SQ1)</name>
    <dbReference type="NCBI Taxonomy" id="398579"/>
    <lineage>
        <taxon>Bacteria</taxon>
        <taxon>Pseudomonadati</taxon>
        <taxon>Pseudomonadota</taxon>
        <taxon>Gammaproteobacteria</taxon>
        <taxon>Alteromonadales</taxon>
        <taxon>Shewanellaceae</taxon>
        <taxon>Shewanella</taxon>
    </lineage>
</organism>
<feature type="chain" id="PRO_1000085945" description="Small ribosomal subunit protein uS8">
    <location>
        <begin position="1"/>
        <end position="130"/>
    </location>
</feature>